<reference key="1">
    <citation type="journal article" date="1999" name="J. Appl. Microbiol.">
        <title>Sequence, assembly and analysis of pXO1 and pXO2.</title>
        <authorList>
            <person name="Okinaka R.T."/>
            <person name="Cloud K."/>
            <person name="Hampton O."/>
            <person name="Hoffmaster A."/>
            <person name="Hill K.K."/>
            <person name="Keim P."/>
            <person name="Koehler T."/>
            <person name="Lamke G."/>
            <person name="Kumano S."/>
            <person name="Manter D."/>
            <person name="Martinez Y."/>
            <person name="Ricke D."/>
            <person name="Svensson R."/>
            <person name="Jackson P.J."/>
        </authorList>
    </citation>
    <scope>NUCLEOTIDE SEQUENCE [GENOMIC DNA]</scope>
    <source>
        <strain>Pasteur</strain>
    </source>
</reference>
<reference key="2">
    <citation type="journal article" date="2002" name="Science">
        <title>Comparative genome sequencing for discovery of novel polymorphisms in Bacillus anthracis.</title>
        <authorList>
            <person name="Read T.D."/>
            <person name="Salzberg S.L."/>
            <person name="Pop M."/>
            <person name="Shumway M.F."/>
            <person name="Umayam L."/>
            <person name="Jiang L."/>
            <person name="Holtzapple E."/>
            <person name="Busch J.D."/>
            <person name="Smith K.L."/>
            <person name="Schupp J.M."/>
            <person name="Solomon D."/>
            <person name="Keim P."/>
            <person name="Fraser C.M."/>
        </authorList>
    </citation>
    <scope>NUCLEOTIDE SEQUENCE [GENOMIC DNA]</scope>
    <source>
        <strain>Ames / isolate Florida / A2012</strain>
    </source>
</reference>
<reference key="3">
    <citation type="journal article" date="2009" name="J. Bacteriol.">
        <title>The complete genome sequence of Bacillus anthracis Ames 'Ancestor'.</title>
        <authorList>
            <person name="Ravel J."/>
            <person name="Jiang L."/>
            <person name="Stanley S.T."/>
            <person name="Wilson M.R."/>
            <person name="Decker R.S."/>
            <person name="Read T.D."/>
            <person name="Worsham P."/>
            <person name="Keim P.S."/>
            <person name="Salzberg S.L."/>
            <person name="Fraser-Liggett C.M."/>
            <person name="Rasko D.A."/>
        </authorList>
    </citation>
    <scope>NUCLEOTIDE SEQUENCE [LARGE SCALE GENOMIC DNA]</scope>
    <source>
        <strain>Ames ancestor</strain>
    </source>
</reference>
<dbReference type="EMBL" id="AF188935">
    <property type="protein sequence ID" value="AAF13667.1"/>
    <property type="molecule type" value="Genomic_DNA"/>
</dbReference>
<dbReference type="EMBL" id="AE011191">
    <property type="status" value="NOT_ANNOTATED_CDS"/>
    <property type="molecule type" value="Genomic_DNA"/>
</dbReference>
<dbReference type="EMBL" id="AE017335">
    <property type="status" value="NOT_ANNOTATED_CDS"/>
    <property type="molecule type" value="Genomic_DNA"/>
</dbReference>
<dbReference type="RefSeq" id="NP_053217.1">
    <property type="nucleotide sequence ID" value="NC_002146.1"/>
</dbReference>
<dbReference type="SMR" id="Q9RMX1"/>
<dbReference type="KEGG" id="banh:HYU01_29365"/>
<dbReference type="Proteomes" id="UP000000594">
    <property type="component" value="Plasmid pXO2"/>
</dbReference>
<dbReference type="Gene3D" id="3.40.50.2300">
    <property type="match status" value="1"/>
</dbReference>
<dbReference type="InterPro" id="IPR050661">
    <property type="entry name" value="BglG_antiterminators"/>
</dbReference>
<dbReference type="PANTHER" id="PTHR30185">
    <property type="entry name" value="CRYPTIC BETA-GLUCOSIDE BGL OPERON ANTITERMINATOR"/>
    <property type="match status" value="1"/>
</dbReference>
<dbReference type="PANTHER" id="PTHR30185:SF18">
    <property type="entry name" value="TRANSCRIPTIONAL REGULATOR MTLR"/>
    <property type="match status" value="1"/>
</dbReference>
<name>Y6576_BACAN</name>
<protein>
    <recommendedName>
        <fullName>Putative trans-acting regulator pXO2-62/BXB0076/GBAA_pXO2_0076</fullName>
    </recommendedName>
</protein>
<geneLocation type="plasmid">
    <name>pXO2</name>
</geneLocation>
<feature type="chain" id="PRO_0000219548" description="Putative trans-acting regulator pXO2-62/BXB0076/GBAA_pXO2_0076">
    <location>
        <begin position="1"/>
        <end position="153"/>
    </location>
</feature>
<comment type="similarity">
    <text evidence="1">Belongs to the AtxA/AcpA family.</text>
</comment>
<comment type="caution">
    <text evidence="1">Could be the product of a pseudogene. This sequence is much shorter than orthologs.</text>
</comment>
<organism>
    <name type="scientific">Bacillus anthracis</name>
    <dbReference type="NCBI Taxonomy" id="1392"/>
    <lineage>
        <taxon>Bacteria</taxon>
        <taxon>Bacillati</taxon>
        <taxon>Bacillota</taxon>
        <taxon>Bacilli</taxon>
        <taxon>Bacillales</taxon>
        <taxon>Bacillaceae</taxon>
        <taxon>Bacillus</taxon>
        <taxon>Bacillus cereus group</taxon>
    </lineage>
</organism>
<accession>Q9RMX1</accession>
<proteinExistence type="uncertain"/>
<sequence length="153" mass="18096">MLNKCFIKNYNYNIQLVRYIESKHSNTFQIIKDYMDTLVYSVKSKFDDYDIALLTMLFETKRMSQNTKVKRVYLYNSYSFIHQNYITALLKEAFKGVIEIVEKDTLNLTYEGLQKKNVDIIISNVKLEIKDIPVVQISDMPTDKELSKIKKLL</sequence>
<keyword id="KW-0614">Plasmid</keyword>
<keyword id="KW-1185">Reference proteome</keyword>
<keyword id="KW-0804">Transcription</keyword>
<keyword id="KW-0805">Transcription regulation</keyword>
<gene>
    <name type="ordered locus">pXO2-62</name>
    <name type="ordered locus">BXB0076</name>
    <name type="ordered locus">GBAA_pXO2_0076</name>
</gene>
<evidence type="ECO:0000305" key="1"/>